<name>CENPP_MOUSE</name>
<organism>
    <name type="scientific">Mus musculus</name>
    <name type="common">Mouse</name>
    <dbReference type="NCBI Taxonomy" id="10090"/>
    <lineage>
        <taxon>Eukaryota</taxon>
        <taxon>Metazoa</taxon>
        <taxon>Chordata</taxon>
        <taxon>Craniata</taxon>
        <taxon>Vertebrata</taxon>
        <taxon>Euteleostomi</taxon>
        <taxon>Mammalia</taxon>
        <taxon>Eutheria</taxon>
        <taxon>Euarchontoglires</taxon>
        <taxon>Glires</taxon>
        <taxon>Rodentia</taxon>
        <taxon>Myomorpha</taxon>
        <taxon>Muroidea</taxon>
        <taxon>Muridae</taxon>
        <taxon>Murinae</taxon>
        <taxon>Mus</taxon>
        <taxon>Mus</taxon>
    </lineage>
</organism>
<comment type="function">
    <text evidence="1">Component of the CENPA-CAD (nucleosome distal) complex, a complex recruited to centromeres which is involved in assembly of kinetochore proteins, mitotic progression and chromosome segregation. May be involved in incorporation of newly synthesized CENPA into centromeres via its interaction with the CENPA-NAC complex (By similarity).</text>
</comment>
<comment type="subunit">
    <text evidence="1">Component of the CENPA-CAD complex, composed of CENPI, CENPK, CENPL, CENPO, CENPP, CENPQ, CENPR and CENPS. The CENPA-CAD complex interacts with the CENPA-NAC complex, at least composed of CENPA, CENPC, CENPH, CENPM, CENPN, CENPT and CENPU (By similarity).</text>
</comment>
<comment type="subcellular location">
    <subcellularLocation>
        <location evidence="1">Nucleus</location>
    </subcellularLocation>
    <subcellularLocation>
        <location evidence="1">Chromosome</location>
        <location evidence="1">Centromere</location>
    </subcellularLocation>
    <text evidence="1">Localizes exclusively in the centromeres. The CENPA-CAD complex is probably recruited on centromeres by the CENPA-NAC complex (By similarity).</text>
</comment>
<comment type="alternative products">
    <event type="alternative splicing"/>
    <isoform>
        <id>Q9CZ92-1</id>
        <name>1</name>
        <sequence type="displayed"/>
    </isoform>
    <isoform>
        <id>Q9CZ92-2</id>
        <name>2</name>
        <sequence type="described" ref="VSP_020449 VSP_020450"/>
    </isoform>
</comment>
<comment type="similarity">
    <text evidence="5">Belongs to the CENP-P/CTF19 family.</text>
</comment>
<comment type="sequence caution" evidence="5">
    <conflict type="frameshift">
        <sequence resource="EMBL-CDS" id="BAB24472"/>
    </conflict>
</comment>
<comment type="sequence caution" evidence="5">
    <conflict type="erroneous initiation">
        <sequence resource="EMBL-CDS" id="BAB29620"/>
    </conflict>
</comment>
<comment type="sequence caution" evidence="5">
    <conflict type="frameshift">
        <sequence resource="EMBL-CDS" id="BAC36401"/>
    </conflict>
</comment>
<comment type="sequence caution" evidence="5">
    <conflict type="frameshift">
        <sequence resource="EMBL" id="BC094280"/>
    </conflict>
</comment>
<gene>
    <name type="primary">Cenpp</name>
</gene>
<evidence type="ECO:0000250" key="1"/>
<evidence type="ECO:0000250" key="2">
    <source>
        <dbReference type="UniProtKB" id="Q6IPU0"/>
    </source>
</evidence>
<evidence type="ECO:0000255" key="3"/>
<evidence type="ECO:0000303" key="4">
    <source>
    </source>
</evidence>
<evidence type="ECO:0000305" key="5"/>
<dbReference type="EMBL" id="AK006234">
    <property type="protein sequence ID" value="BAB24472.1"/>
    <property type="status" value="ALT_FRAME"/>
    <property type="molecule type" value="mRNA"/>
</dbReference>
<dbReference type="EMBL" id="AK012863">
    <property type="protein sequence ID" value="BAB28519.1"/>
    <property type="molecule type" value="mRNA"/>
</dbReference>
<dbReference type="EMBL" id="AK014919">
    <property type="protein sequence ID" value="BAB29620.1"/>
    <property type="status" value="ALT_INIT"/>
    <property type="molecule type" value="mRNA"/>
</dbReference>
<dbReference type="EMBL" id="AK076577">
    <property type="protein sequence ID" value="BAC36401.1"/>
    <property type="status" value="ALT_FRAME"/>
    <property type="molecule type" value="mRNA"/>
</dbReference>
<dbReference type="EMBL" id="BC094280">
    <property type="status" value="NOT_ANNOTATED_CDS"/>
    <property type="molecule type" value="mRNA"/>
</dbReference>
<dbReference type="CCDS" id="CCDS26501.1">
    <molecule id="Q9CZ92-1"/>
</dbReference>
<dbReference type="RefSeq" id="NP_079771.1">
    <molecule id="Q9CZ92-1"/>
    <property type="nucleotide sequence ID" value="NM_025495.4"/>
</dbReference>
<dbReference type="SMR" id="Q9CZ92"/>
<dbReference type="ComplexPortal" id="CPX-5704">
    <property type="entry name" value="Kinetochore CCAN complex"/>
</dbReference>
<dbReference type="CORUM" id="Q9CZ92"/>
<dbReference type="FunCoup" id="Q9CZ92">
    <property type="interactions" value="1975"/>
</dbReference>
<dbReference type="IntAct" id="Q9CZ92">
    <property type="interactions" value="1"/>
</dbReference>
<dbReference type="MINT" id="Q9CZ92"/>
<dbReference type="STRING" id="10090.ENSMUSP00000021818"/>
<dbReference type="iPTMnet" id="Q9CZ92"/>
<dbReference type="PhosphoSitePlus" id="Q9CZ92"/>
<dbReference type="SwissPalm" id="Q9CZ92"/>
<dbReference type="jPOST" id="Q9CZ92"/>
<dbReference type="PaxDb" id="10090-ENSMUSP00000021818"/>
<dbReference type="PeptideAtlas" id="Q9CZ92"/>
<dbReference type="ProteomicsDB" id="281186">
    <molecule id="Q9CZ92-1"/>
</dbReference>
<dbReference type="ProteomicsDB" id="281187">
    <molecule id="Q9CZ92-2"/>
</dbReference>
<dbReference type="Pumba" id="Q9CZ92"/>
<dbReference type="Antibodypedia" id="13721">
    <property type="antibodies" value="139 antibodies from 28 providers"/>
</dbReference>
<dbReference type="DNASU" id="66336"/>
<dbReference type="Ensembl" id="ENSMUST00000021818.9">
    <molecule id="Q9CZ92-1"/>
    <property type="protein sequence ID" value="ENSMUSP00000021818.8"/>
    <property type="gene ID" value="ENSMUSG00000021391.11"/>
</dbReference>
<dbReference type="GeneID" id="66336"/>
<dbReference type="KEGG" id="mmu:66336"/>
<dbReference type="UCSC" id="uc007qjk.1">
    <molecule id="Q9CZ92-1"/>
    <property type="organism name" value="mouse"/>
</dbReference>
<dbReference type="UCSC" id="uc007qjo.1">
    <molecule id="Q9CZ92-2"/>
    <property type="organism name" value="mouse"/>
</dbReference>
<dbReference type="AGR" id="MGI:1913586"/>
<dbReference type="CTD" id="401541"/>
<dbReference type="MGI" id="MGI:1913586">
    <property type="gene designation" value="Cenpp"/>
</dbReference>
<dbReference type="VEuPathDB" id="HostDB:ENSMUSG00000021391"/>
<dbReference type="eggNOG" id="ENOG502S17P">
    <property type="taxonomic scope" value="Eukaryota"/>
</dbReference>
<dbReference type="GeneTree" id="ENSGT00390000011897"/>
<dbReference type="HOGENOM" id="CLU_084497_0_0_1"/>
<dbReference type="InParanoid" id="Q9CZ92"/>
<dbReference type="OMA" id="TYAEWYE"/>
<dbReference type="OrthoDB" id="5976950at2759"/>
<dbReference type="PhylomeDB" id="Q9CZ92"/>
<dbReference type="TreeFam" id="TF333784"/>
<dbReference type="Reactome" id="R-MMU-141444">
    <property type="pathway name" value="Amplification of signal from unattached kinetochores via a MAD2 inhibitory signal"/>
</dbReference>
<dbReference type="Reactome" id="R-MMU-2467813">
    <property type="pathway name" value="Separation of Sister Chromatids"/>
</dbReference>
<dbReference type="Reactome" id="R-MMU-2500257">
    <property type="pathway name" value="Resolution of Sister Chromatid Cohesion"/>
</dbReference>
<dbReference type="Reactome" id="R-MMU-5663220">
    <property type="pathway name" value="RHO GTPases Activate Formins"/>
</dbReference>
<dbReference type="Reactome" id="R-MMU-606279">
    <property type="pathway name" value="Deposition of new CENPA-containing nucleosomes at the centromere"/>
</dbReference>
<dbReference type="Reactome" id="R-MMU-68877">
    <property type="pathway name" value="Mitotic Prometaphase"/>
</dbReference>
<dbReference type="Reactome" id="R-MMU-9648025">
    <property type="pathway name" value="EML4 and NUDC in mitotic spindle formation"/>
</dbReference>
<dbReference type="BioGRID-ORCS" id="66336">
    <property type="hits" value="22 hits in 79 CRISPR screens"/>
</dbReference>
<dbReference type="ChiTaRS" id="Cenpp">
    <property type="organism name" value="mouse"/>
</dbReference>
<dbReference type="PRO" id="PR:Q9CZ92"/>
<dbReference type="Proteomes" id="UP000000589">
    <property type="component" value="Chromosome 13"/>
</dbReference>
<dbReference type="RNAct" id="Q9CZ92">
    <property type="molecule type" value="protein"/>
</dbReference>
<dbReference type="Bgee" id="ENSMUSG00000021391">
    <property type="expression patterns" value="Expressed in primitive streak and 160 other cell types or tissues"/>
</dbReference>
<dbReference type="ExpressionAtlas" id="Q9CZ92">
    <property type="expression patterns" value="baseline and differential"/>
</dbReference>
<dbReference type="GO" id="GO:0000939">
    <property type="term" value="C:inner kinetochore"/>
    <property type="evidence" value="ECO:0000266"/>
    <property type="project" value="ComplexPortal"/>
</dbReference>
<dbReference type="GO" id="GO:0005730">
    <property type="term" value="C:nucleolus"/>
    <property type="evidence" value="ECO:0007669"/>
    <property type="project" value="Ensembl"/>
</dbReference>
<dbReference type="GO" id="GO:0005654">
    <property type="term" value="C:nucleoplasm"/>
    <property type="evidence" value="ECO:0007669"/>
    <property type="project" value="Ensembl"/>
</dbReference>
<dbReference type="GO" id="GO:0005634">
    <property type="term" value="C:nucleus"/>
    <property type="evidence" value="ECO:0000303"/>
    <property type="project" value="ComplexPortal"/>
</dbReference>
<dbReference type="GO" id="GO:0034080">
    <property type="term" value="P:CENP-A containing chromatin assembly"/>
    <property type="evidence" value="ECO:0007669"/>
    <property type="project" value="InterPro"/>
</dbReference>
<dbReference type="GO" id="GO:0007059">
    <property type="term" value="P:chromosome segregation"/>
    <property type="evidence" value="ECO:0000303"/>
    <property type="project" value="ComplexPortal"/>
</dbReference>
<dbReference type="InterPro" id="IPR027801">
    <property type="entry name" value="CENP-P"/>
</dbReference>
<dbReference type="PANTHER" id="PTHR28577">
    <property type="entry name" value="CENTROMERE PROTEIN P"/>
    <property type="match status" value="1"/>
</dbReference>
<dbReference type="PANTHER" id="PTHR28577:SF1">
    <property type="entry name" value="CENTROMERE PROTEIN P"/>
    <property type="match status" value="1"/>
</dbReference>
<dbReference type="Pfam" id="PF13096">
    <property type="entry name" value="CENP-P"/>
    <property type="match status" value="1"/>
</dbReference>
<sequence>MDSETRELRALEAEVAALQRECRMLQNAGEKASGAWKSFQKISQSDSEEWESLKDLRSQLEHLRSEHSFLSKLTGFNIRNYSKMEDIVNTEETEKDTKKVLQKHRLSGNCNMVTFQLEFEVLEMETKEKKSSIITDLSIIMEPTEYSELSEFASRAEEKRDLLMFFRSLHFFVEWCEYRENTFKHFKEKYPDTVYLLEGTCSHCMEIRSTRQPGFELVIVWKIQIDEEGMVFPKLDLLTKVPERALGLDKNRVIETAPLSFRSLLGVLGIEAALDSLIRLFSGDNN</sequence>
<keyword id="KW-0025">Alternative splicing</keyword>
<keyword id="KW-0137">Centromere</keyword>
<keyword id="KW-0158">Chromosome</keyword>
<keyword id="KW-0175">Coiled coil</keyword>
<keyword id="KW-0539">Nucleus</keyword>
<keyword id="KW-0597">Phosphoprotein</keyword>
<keyword id="KW-1185">Reference proteome</keyword>
<proteinExistence type="evidence at transcript level"/>
<protein>
    <recommendedName>
        <fullName>Centromere protein P</fullName>
        <shortName>CENP-P</shortName>
    </recommendedName>
</protein>
<accession>Q9CZ92</accession>
<accession>Q52KM2</accession>
<accession>Q8C647</accession>
<accession>Q9CVW9</accession>
<accession>Q9D5U7</accession>
<feature type="chain" id="PRO_0000249507" description="Centromere protein P">
    <location>
        <begin position="1"/>
        <end position="286"/>
    </location>
</feature>
<feature type="coiled-coil region" evidence="3">
    <location>
        <begin position="1"/>
        <end position="73"/>
    </location>
</feature>
<feature type="modified residue" description="Phosphoserine" evidence="2">
    <location>
        <position position="38"/>
    </location>
</feature>
<feature type="splice variant" id="VSP_020449" description="In isoform 2." evidence="4">
    <original>EKYPDTVYLLEGTCSHCMEIRSTRQPGFELVIVWKIQIDEEGMVFPKLDLLTK</original>
    <variation>THSLSISSQERAGLQETTTKHDQTRNLEAGTYAEAIEGCCLLDWFPWLTQLAL</variation>
    <location>
        <begin position="188"/>
        <end position="240"/>
    </location>
</feature>
<feature type="splice variant" id="VSP_020450" description="In isoform 2." evidence="4">
    <location>
        <begin position="241"/>
        <end position="286"/>
    </location>
</feature>
<feature type="sequence conflict" description="In Ref. 1; BAC36401." evidence="5" ref="1">
    <original>E</original>
    <variation>G</variation>
    <location>
        <position position="177"/>
    </location>
</feature>
<reference key="1">
    <citation type="journal article" date="2005" name="Science">
        <title>The transcriptional landscape of the mammalian genome.</title>
        <authorList>
            <person name="Carninci P."/>
            <person name="Kasukawa T."/>
            <person name="Katayama S."/>
            <person name="Gough J."/>
            <person name="Frith M.C."/>
            <person name="Maeda N."/>
            <person name="Oyama R."/>
            <person name="Ravasi T."/>
            <person name="Lenhard B."/>
            <person name="Wells C."/>
            <person name="Kodzius R."/>
            <person name="Shimokawa K."/>
            <person name="Bajic V.B."/>
            <person name="Brenner S.E."/>
            <person name="Batalov S."/>
            <person name="Forrest A.R."/>
            <person name="Zavolan M."/>
            <person name="Davis M.J."/>
            <person name="Wilming L.G."/>
            <person name="Aidinis V."/>
            <person name="Allen J.E."/>
            <person name="Ambesi-Impiombato A."/>
            <person name="Apweiler R."/>
            <person name="Aturaliya R.N."/>
            <person name="Bailey T.L."/>
            <person name="Bansal M."/>
            <person name="Baxter L."/>
            <person name="Beisel K.W."/>
            <person name="Bersano T."/>
            <person name="Bono H."/>
            <person name="Chalk A.M."/>
            <person name="Chiu K.P."/>
            <person name="Choudhary V."/>
            <person name="Christoffels A."/>
            <person name="Clutterbuck D.R."/>
            <person name="Crowe M.L."/>
            <person name="Dalla E."/>
            <person name="Dalrymple B.P."/>
            <person name="de Bono B."/>
            <person name="Della Gatta G."/>
            <person name="di Bernardo D."/>
            <person name="Down T."/>
            <person name="Engstrom P."/>
            <person name="Fagiolini M."/>
            <person name="Faulkner G."/>
            <person name="Fletcher C.F."/>
            <person name="Fukushima T."/>
            <person name="Furuno M."/>
            <person name="Futaki S."/>
            <person name="Gariboldi M."/>
            <person name="Georgii-Hemming P."/>
            <person name="Gingeras T.R."/>
            <person name="Gojobori T."/>
            <person name="Green R.E."/>
            <person name="Gustincich S."/>
            <person name="Harbers M."/>
            <person name="Hayashi Y."/>
            <person name="Hensch T.K."/>
            <person name="Hirokawa N."/>
            <person name="Hill D."/>
            <person name="Huminiecki L."/>
            <person name="Iacono M."/>
            <person name="Ikeo K."/>
            <person name="Iwama A."/>
            <person name="Ishikawa T."/>
            <person name="Jakt M."/>
            <person name="Kanapin A."/>
            <person name="Katoh M."/>
            <person name="Kawasawa Y."/>
            <person name="Kelso J."/>
            <person name="Kitamura H."/>
            <person name="Kitano H."/>
            <person name="Kollias G."/>
            <person name="Krishnan S.P."/>
            <person name="Kruger A."/>
            <person name="Kummerfeld S.K."/>
            <person name="Kurochkin I.V."/>
            <person name="Lareau L.F."/>
            <person name="Lazarevic D."/>
            <person name="Lipovich L."/>
            <person name="Liu J."/>
            <person name="Liuni S."/>
            <person name="McWilliam S."/>
            <person name="Madan Babu M."/>
            <person name="Madera M."/>
            <person name="Marchionni L."/>
            <person name="Matsuda H."/>
            <person name="Matsuzawa S."/>
            <person name="Miki H."/>
            <person name="Mignone F."/>
            <person name="Miyake S."/>
            <person name="Morris K."/>
            <person name="Mottagui-Tabar S."/>
            <person name="Mulder N."/>
            <person name="Nakano N."/>
            <person name="Nakauchi H."/>
            <person name="Ng P."/>
            <person name="Nilsson R."/>
            <person name="Nishiguchi S."/>
            <person name="Nishikawa S."/>
            <person name="Nori F."/>
            <person name="Ohara O."/>
            <person name="Okazaki Y."/>
            <person name="Orlando V."/>
            <person name="Pang K.C."/>
            <person name="Pavan W.J."/>
            <person name="Pavesi G."/>
            <person name="Pesole G."/>
            <person name="Petrovsky N."/>
            <person name="Piazza S."/>
            <person name="Reed J."/>
            <person name="Reid J.F."/>
            <person name="Ring B.Z."/>
            <person name="Ringwald M."/>
            <person name="Rost B."/>
            <person name="Ruan Y."/>
            <person name="Salzberg S.L."/>
            <person name="Sandelin A."/>
            <person name="Schneider C."/>
            <person name="Schoenbach C."/>
            <person name="Sekiguchi K."/>
            <person name="Semple C.A."/>
            <person name="Seno S."/>
            <person name="Sessa L."/>
            <person name="Sheng Y."/>
            <person name="Shibata Y."/>
            <person name="Shimada H."/>
            <person name="Shimada K."/>
            <person name="Silva D."/>
            <person name="Sinclair B."/>
            <person name="Sperling S."/>
            <person name="Stupka E."/>
            <person name="Sugiura K."/>
            <person name="Sultana R."/>
            <person name="Takenaka Y."/>
            <person name="Taki K."/>
            <person name="Tammoja K."/>
            <person name="Tan S.L."/>
            <person name="Tang S."/>
            <person name="Taylor M.S."/>
            <person name="Tegner J."/>
            <person name="Teichmann S.A."/>
            <person name="Ueda H.R."/>
            <person name="van Nimwegen E."/>
            <person name="Verardo R."/>
            <person name="Wei C.L."/>
            <person name="Yagi K."/>
            <person name="Yamanishi H."/>
            <person name="Zabarovsky E."/>
            <person name="Zhu S."/>
            <person name="Zimmer A."/>
            <person name="Hide W."/>
            <person name="Bult C."/>
            <person name="Grimmond S.M."/>
            <person name="Teasdale R.D."/>
            <person name="Liu E.T."/>
            <person name="Brusic V."/>
            <person name="Quackenbush J."/>
            <person name="Wahlestedt C."/>
            <person name="Mattick J.S."/>
            <person name="Hume D.A."/>
            <person name="Kai C."/>
            <person name="Sasaki D."/>
            <person name="Tomaru Y."/>
            <person name="Fukuda S."/>
            <person name="Kanamori-Katayama M."/>
            <person name="Suzuki M."/>
            <person name="Aoki J."/>
            <person name="Arakawa T."/>
            <person name="Iida J."/>
            <person name="Imamura K."/>
            <person name="Itoh M."/>
            <person name="Kato T."/>
            <person name="Kawaji H."/>
            <person name="Kawagashira N."/>
            <person name="Kawashima T."/>
            <person name="Kojima M."/>
            <person name="Kondo S."/>
            <person name="Konno H."/>
            <person name="Nakano K."/>
            <person name="Ninomiya N."/>
            <person name="Nishio T."/>
            <person name="Okada M."/>
            <person name="Plessy C."/>
            <person name="Shibata K."/>
            <person name="Shiraki T."/>
            <person name="Suzuki S."/>
            <person name="Tagami M."/>
            <person name="Waki K."/>
            <person name="Watahiki A."/>
            <person name="Okamura-Oho Y."/>
            <person name="Suzuki H."/>
            <person name="Kawai J."/>
            <person name="Hayashizaki Y."/>
        </authorList>
    </citation>
    <scope>NUCLEOTIDE SEQUENCE [LARGE SCALE MRNA] (ISOFORMS 1 AND 2)</scope>
    <source>
        <strain>C57BL/6J</strain>
        <tissue>Embryo</tissue>
        <tissue>Testis</tissue>
    </source>
</reference>
<reference key="2">
    <citation type="journal article" date="2004" name="Genome Res.">
        <title>The status, quality, and expansion of the NIH full-length cDNA project: the Mammalian Gene Collection (MGC).</title>
        <authorList>
            <consortium name="The MGC Project Team"/>
        </authorList>
    </citation>
    <scope>NUCLEOTIDE SEQUENCE [LARGE SCALE MRNA] (ISOFORM 1)</scope>
    <source>
        <strain>NMRI</strain>
        <tissue>Mammary tumor</tissue>
    </source>
</reference>